<name>LPXD_SYNAS</name>
<gene>
    <name evidence="1" type="primary">lpxD</name>
    <name type="ordered locus">SYNAS_22480</name>
    <name type="ORF">SYN_01568</name>
</gene>
<comment type="function">
    <text evidence="1">Catalyzes the N-acylation of UDP-3-O-acylglucosamine using 3-hydroxyacyl-ACP as the acyl donor. Is involved in the biosynthesis of lipid A, a phosphorylated glycolipid that anchors the lipopolysaccharide to the outer membrane of the cell.</text>
</comment>
<comment type="catalytic activity">
    <reaction evidence="1">
        <text>a UDP-3-O-[(3R)-3-hydroxyacyl]-alpha-D-glucosamine + a (3R)-hydroxyacyl-[ACP] = a UDP-2-N,3-O-bis[(3R)-3-hydroxyacyl]-alpha-D-glucosamine + holo-[ACP] + H(+)</text>
        <dbReference type="Rhea" id="RHEA:53836"/>
        <dbReference type="Rhea" id="RHEA-COMP:9685"/>
        <dbReference type="Rhea" id="RHEA-COMP:9945"/>
        <dbReference type="ChEBI" id="CHEBI:15378"/>
        <dbReference type="ChEBI" id="CHEBI:64479"/>
        <dbReference type="ChEBI" id="CHEBI:78827"/>
        <dbReference type="ChEBI" id="CHEBI:137740"/>
        <dbReference type="ChEBI" id="CHEBI:137748"/>
        <dbReference type="EC" id="2.3.1.191"/>
    </reaction>
</comment>
<comment type="pathway">
    <text evidence="1">Bacterial outer membrane biogenesis; LPS lipid A biosynthesis.</text>
</comment>
<comment type="subunit">
    <text evidence="1">Homotrimer.</text>
</comment>
<comment type="similarity">
    <text evidence="1">Belongs to the transferase hexapeptide repeat family. LpxD subfamily.</text>
</comment>
<keyword id="KW-0012">Acyltransferase</keyword>
<keyword id="KW-0441">Lipid A biosynthesis</keyword>
<keyword id="KW-0444">Lipid biosynthesis</keyword>
<keyword id="KW-0443">Lipid metabolism</keyword>
<keyword id="KW-1185">Reference proteome</keyword>
<keyword id="KW-0677">Repeat</keyword>
<keyword id="KW-0808">Transferase</keyword>
<evidence type="ECO:0000255" key="1">
    <source>
        <dbReference type="HAMAP-Rule" id="MF_00523"/>
    </source>
</evidence>
<evidence type="ECO:0000256" key="2">
    <source>
        <dbReference type="SAM" id="MobiDB-lite"/>
    </source>
</evidence>
<feature type="chain" id="PRO_0000264449" description="UDP-3-O-acylglucosamine N-acyltransferase">
    <location>
        <begin position="1"/>
        <end position="363"/>
    </location>
</feature>
<feature type="region of interest" description="Disordered" evidence="2">
    <location>
        <begin position="342"/>
        <end position="363"/>
    </location>
</feature>
<feature type="active site" description="Proton acceptor" evidence="1">
    <location>
        <position position="239"/>
    </location>
</feature>
<dbReference type="EC" id="2.3.1.191" evidence="1"/>
<dbReference type="EMBL" id="CP000252">
    <property type="protein sequence ID" value="ABC78127.1"/>
    <property type="molecule type" value="Genomic_DNA"/>
</dbReference>
<dbReference type="RefSeq" id="WP_011418147.1">
    <property type="nucleotide sequence ID" value="NC_007759.1"/>
</dbReference>
<dbReference type="SMR" id="Q2LVL5"/>
<dbReference type="FunCoup" id="Q2LVL5">
    <property type="interactions" value="346"/>
</dbReference>
<dbReference type="STRING" id="56780.SYN_01568"/>
<dbReference type="KEGG" id="sat:SYN_01568"/>
<dbReference type="eggNOG" id="COG1044">
    <property type="taxonomic scope" value="Bacteria"/>
</dbReference>
<dbReference type="HOGENOM" id="CLU_049865_0_0_7"/>
<dbReference type="InParanoid" id="Q2LVL5"/>
<dbReference type="OrthoDB" id="9784739at2"/>
<dbReference type="UniPathway" id="UPA00973"/>
<dbReference type="Proteomes" id="UP000001933">
    <property type="component" value="Chromosome"/>
</dbReference>
<dbReference type="GO" id="GO:0016020">
    <property type="term" value="C:membrane"/>
    <property type="evidence" value="ECO:0007669"/>
    <property type="project" value="GOC"/>
</dbReference>
<dbReference type="GO" id="GO:0016410">
    <property type="term" value="F:N-acyltransferase activity"/>
    <property type="evidence" value="ECO:0007669"/>
    <property type="project" value="InterPro"/>
</dbReference>
<dbReference type="GO" id="GO:0009245">
    <property type="term" value="P:lipid A biosynthetic process"/>
    <property type="evidence" value="ECO:0007669"/>
    <property type="project" value="UniProtKB-UniRule"/>
</dbReference>
<dbReference type="CDD" id="cd03352">
    <property type="entry name" value="LbH_LpxD"/>
    <property type="match status" value="1"/>
</dbReference>
<dbReference type="Gene3D" id="2.160.10.10">
    <property type="entry name" value="Hexapeptide repeat proteins"/>
    <property type="match status" value="1"/>
</dbReference>
<dbReference type="Gene3D" id="3.40.1390.10">
    <property type="entry name" value="MurE/MurF, N-terminal domain"/>
    <property type="match status" value="1"/>
</dbReference>
<dbReference type="HAMAP" id="MF_00523">
    <property type="entry name" value="LpxD"/>
    <property type="match status" value="1"/>
</dbReference>
<dbReference type="InterPro" id="IPR001451">
    <property type="entry name" value="Hexapep"/>
</dbReference>
<dbReference type="InterPro" id="IPR018357">
    <property type="entry name" value="Hexapep_transf_CS"/>
</dbReference>
<dbReference type="InterPro" id="IPR007691">
    <property type="entry name" value="LpxD"/>
</dbReference>
<dbReference type="InterPro" id="IPR011004">
    <property type="entry name" value="Trimer_LpxA-like_sf"/>
</dbReference>
<dbReference type="InterPro" id="IPR020573">
    <property type="entry name" value="UDP_GlcNAc_AcTrfase_non-rep"/>
</dbReference>
<dbReference type="NCBIfam" id="TIGR01853">
    <property type="entry name" value="lipid_A_lpxD"/>
    <property type="match status" value="1"/>
</dbReference>
<dbReference type="NCBIfam" id="NF002060">
    <property type="entry name" value="PRK00892.1"/>
    <property type="match status" value="1"/>
</dbReference>
<dbReference type="PANTHER" id="PTHR43378">
    <property type="entry name" value="UDP-3-O-ACYLGLUCOSAMINE N-ACYLTRANSFERASE"/>
    <property type="match status" value="1"/>
</dbReference>
<dbReference type="PANTHER" id="PTHR43378:SF2">
    <property type="entry name" value="UDP-3-O-ACYLGLUCOSAMINE N-ACYLTRANSFERASE 1, MITOCHONDRIAL-RELATED"/>
    <property type="match status" value="1"/>
</dbReference>
<dbReference type="Pfam" id="PF00132">
    <property type="entry name" value="Hexapep"/>
    <property type="match status" value="2"/>
</dbReference>
<dbReference type="Pfam" id="PF04613">
    <property type="entry name" value="LpxD"/>
    <property type="match status" value="1"/>
</dbReference>
<dbReference type="SUPFAM" id="SSF51161">
    <property type="entry name" value="Trimeric LpxA-like enzymes"/>
    <property type="match status" value="1"/>
</dbReference>
<dbReference type="PROSITE" id="PS00101">
    <property type="entry name" value="HEXAPEP_TRANSFERASES"/>
    <property type="match status" value="2"/>
</dbReference>
<accession>Q2LVL5</accession>
<reference key="1">
    <citation type="journal article" date="2007" name="Proc. Natl. Acad. Sci. U.S.A.">
        <title>The genome of Syntrophus aciditrophicus: life at the thermodynamic limit of microbial growth.</title>
        <authorList>
            <person name="McInerney M.J."/>
            <person name="Rohlin L."/>
            <person name="Mouttaki H."/>
            <person name="Kim U."/>
            <person name="Krupp R.S."/>
            <person name="Rios-Hernandez L."/>
            <person name="Sieber J."/>
            <person name="Struchtemeyer C.G."/>
            <person name="Bhattacharyya A."/>
            <person name="Campbell J.W."/>
            <person name="Gunsalus R.P."/>
        </authorList>
    </citation>
    <scope>NUCLEOTIDE SEQUENCE [LARGE SCALE GENOMIC DNA]</scope>
    <source>
        <strain>SB</strain>
    </source>
</reference>
<protein>
    <recommendedName>
        <fullName evidence="1">UDP-3-O-acylglucosamine N-acyltransferase</fullName>
        <ecNumber evidence="1">2.3.1.191</ecNumber>
    </recommendedName>
</protein>
<sequence>MKKSINEIADFLGGKVVGDGGILIKAVRGIDEAGPGDITFVANPQYEKKLNETGASAVLVTRDTERPGENVTLIQVDDPYVSLGKLLTIFYPEEREKPGISAQAIVEEGAEISPSATVYPGVYISSGAGIGAGVVLYPGVFVGRDAVIGENSILYPNVCVYRRCLIGKRVILHAGAVVGSDGFGFANPGRDNIKIPQIGIVQIDDDVEIGANTTIDRATLGRTWIQRGVKIDNLVQIAHNVVIGEKSIIVSQVGISGSTRLGRSVILGGQAGLVGHLQIGDFAMVGAQSGVHEDVPANSVVSGSPCQPHRNWLRSMSCLPRLPDMRHLLNDLRKRIETLEKLSEMKKEVEKEKESSREKEETK</sequence>
<proteinExistence type="inferred from homology"/>
<organism>
    <name type="scientific">Syntrophus aciditrophicus (strain SB)</name>
    <dbReference type="NCBI Taxonomy" id="56780"/>
    <lineage>
        <taxon>Bacteria</taxon>
        <taxon>Pseudomonadati</taxon>
        <taxon>Thermodesulfobacteriota</taxon>
        <taxon>Syntrophia</taxon>
        <taxon>Syntrophales</taxon>
        <taxon>Syntrophaceae</taxon>
        <taxon>Syntrophus</taxon>
    </lineage>
</organism>